<sequence>MTDAPVISPLDQARILSEALPHMQRYDEETIVIKYGGHAMGAEDTAKAFARDIVLLEQTAVNPVVVHGGGPQIAQMLKRLGIKSEFAAGLRITDAATIEIVEMVLAGSINKQLVGYINEAGGKAVGLCGKDGNMVSASKATRTMVDPDSRIEEVIDLGFVGEPEKVDLTLLNQLIGHELIPVLAPLATSASGQTFNVNADTFAGAVAGALRAKRLLLLTDVPGVLDQNKKLIPELSIKDARKLIADGTISGGMIPKVETCIYALEQGVEGVVILDGKVPHAVLLELFTNQGTGTLIHK</sequence>
<proteinExistence type="inferred from homology"/>
<feature type="chain" id="PRO_0000112657" description="Acetylglutamate kinase">
    <location>
        <begin position="1"/>
        <end position="298"/>
    </location>
</feature>
<feature type="binding site" evidence="1">
    <location>
        <begin position="69"/>
        <end position="70"/>
    </location>
    <ligand>
        <name>substrate</name>
    </ligand>
</feature>
<feature type="binding site" evidence="1">
    <location>
        <position position="91"/>
    </location>
    <ligand>
        <name>substrate</name>
    </ligand>
</feature>
<feature type="binding site" evidence="1">
    <location>
        <position position="196"/>
    </location>
    <ligand>
        <name>substrate</name>
    </ligand>
</feature>
<feature type="site" description="Transition state stabilizer" evidence="1">
    <location>
        <position position="34"/>
    </location>
</feature>
<feature type="site" description="Transition state stabilizer" evidence="1">
    <location>
        <position position="256"/>
    </location>
</feature>
<gene>
    <name evidence="1" type="primary">argB</name>
    <name type="ordered locus">RPA0629</name>
</gene>
<keyword id="KW-0028">Amino-acid biosynthesis</keyword>
<keyword id="KW-0055">Arginine biosynthesis</keyword>
<keyword id="KW-0067">ATP-binding</keyword>
<keyword id="KW-0963">Cytoplasm</keyword>
<keyword id="KW-0418">Kinase</keyword>
<keyword id="KW-0547">Nucleotide-binding</keyword>
<keyword id="KW-0808">Transferase</keyword>
<organism>
    <name type="scientific">Rhodopseudomonas palustris (strain ATCC BAA-98 / CGA009)</name>
    <dbReference type="NCBI Taxonomy" id="258594"/>
    <lineage>
        <taxon>Bacteria</taxon>
        <taxon>Pseudomonadati</taxon>
        <taxon>Pseudomonadota</taxon>
        <taxon>Alphaproteobacteria</taxon>
        <taxon>Hyphomicrobiales</taxon>
        <taxon>Nitrobacteraceae</taxon>
        <taxon>Rhodopseudomonas</taxon>
    </lineage>
</organism>
<comment type="function">
    <text evidence="1">Catalyzes the ATP-dependent phosphorylation of N-acetyl-L-glutamate.</text>
</comment>
<comment type="catalytic activity">
    <reaction evidence="1">
        <text>N-acetyl-L-glutamate + ATP = N-acetyl-L-glutamyl 5-phosphate + ADP</text>
        <dbReference type="Rhea" id="RHEA:14629"/>
        <dbReference type="ChEBI" id="CHEBI:30616"/>
        <dbReference type="ChEBI" id="CHEBI:44337"/>
        <dbReference type="ChEBI" id="CHEBI:57936"/>
        <dbReference type="ChEBI" id="CHEBI:456216"/>
        <dbReference type="EC" id="2.7.2.8"/>
    </reaction>
</comment>
<comment type="pathway">
    <text evidence="1">Amino-acid biosynthesis; L-arginine biosynthesis; N(2)-acetyl-L-ornithine from L-glutamate: step 2/4.</text>
</comment>
<comment type="subcellular location">
    <subcellularLocation>
        <location evidence="1">Cytoplasm</location>
    </subcellularLocation>
</comment>
<comment type="similarity">
    <text evidence="1">Belongs to the acetylglutamate kinase family. ArgB subfamily.</text>
</comment>
<protein>
    <recommendedName>
        <fullName evidence="1">Acetylglutamate kinase</fullName>
        <ecNumber evidence="1">2.7.2.8</ecNumber>
    </recommendedName>
    <alternativeName>
        <fullName evidence="1">N-acetyl-L-glutamate 5-phosphotransferase</fullName>
    </alternativeName>
    <alternativeName>
        <fullName evidence="1">NAG kinase</fullName>
        <shortName evidence="1">NAGK</shortName>
    </alternativeName>
</protein>
<reference key="1">
    <citation type="journal article" date="2004" name="Nat. Biotechnol.">
        <title>Complete genome sequence of the metabolically versatile photosynthetic bacterium Rhodopseudomonas palustris.</title>
        <authorList>
            <person name="Larimer F.W."/>
            <person name="Chain P."/>
            <person name="Hauser L."/>
            <person name="Lamerdin J.E."/>
            <person name="Malfatti S."/>
            <person name="Do L."/>
            <person name="Land M.L."/>
            <person name="Pelletier D.A."/>
            <person name="Beatty J.T."/>
            <person name="Lang A.S."/>
            <person name="Tabita F.R."/>
            <person name="Gibson J.L."/>
            <person name="Hanson T.E."/>
            <person name="Bobst C."/>
            <person name="Torres y Torres J.L."/>
            <person name="Peres C."/>
            <person name="Harrison F.H."/>
            <person name="Gibson J."/>
            <person name="Harwood C.S."/>
        </authorList>
    </citation>
    <scope>NUCLEOTIDE SEQUENCE [LARGE SCALE GENOMIC DNA]</scope>
    <source>
        <strain>ATCC BAA-98 / CGA009</strain>
    </source>
</reference>
<name>ARGB_RHOPA</name>
<dbReference type="EC" id="2.7.2.8" evidence="1"/>
<dbReference type="EMBL" id="BX572594">
    <property type="protein sequence ID" value="CAE26073.1"/>
    <property type="molecule type" value="Genomic_DNA"/>
</dbReference>
<dbReference type="RefSeq" id="WP_011156197.1">
    <property type="nucleotide sequence ID" value="NZ_CP116810.1"/>
</dbReference>
<dbReference type="SMR" id="Q6NC44"/>
<dbReference type="STRING" id="258594.RPA0629"/>
<dbReference type="GeneID" id="66891650"/>
<dbReference type="eggNOG" id="COG0548">
    <property type="taxonomic scope" value="Bacteria"/>
</dbReference>
<dbReference type="HOGENOM" id="CLU_053680_0_0_5"/>
<dbReference type="PhylomeDB" id="Q6NC44"/>
<dbReference type="UniPathway" id="UPA00068">
    <property type="reaction ID" value="UER00107"/>
</dbReference>
<dbReference type="GO" id="GO:0005737">
    <property type="term" value="C:cytoplasm"/>
    <property type="evidence" value="ECO:0007669"/>
    <property type="project" value="UniProtKB-SubCell"/>
</dbReference>
<dbReference type="GO" id="GO:0003991">
    <property type="term" value="F:acetylglutamate kinase activity"/>
    <property type="evidence" value="ECO:0007669"/>
    <property type="project" value="UniProtKB-UniRule"/>
</dbReference>
<dbReference type="GO" id="GO:0005524">
    <property type="term" value="F:ATP binding"/>
    <property type="evidence" value="ECO:0007669"/>
    <property type="project" value="UniProtKB-UniRule"/>
</dbReference>
<dbReference type="GO" id="GO:0042450">
    <property type="term" value="P:arginine biosynthetic process via ornithine"/>
    <property type="evidence" value="ECO:0007669"/>
    <property type="project" value="UniProtKB-UniRule"/>
</dbReference>
<dbReference type="GO" id="GO:0006526">
    <property type="term" value="P:L-arginine biosynthetic process"/>
    <property type="evidence" value="ECO:0007669"/>
    <property type="project" value="UniProtKB-UniPathway"/>
</dbReference>
<dbReference type="CDD" id="cd04250">
    <property type="entry name" value="AAK_NAGK-C"/>
    <property type="match status" value="1"/>
</dbReference>
<dbReference type="FunFam" id="3.40.1160.10:FF:000004">
    <property type="entry name" value="Acetylglutamate kinase"/>
    <property type="match status" value="1"/>
</dbReference>
<dbReference type="Gene3D" id="3.40.1160.10">
    <property type="entry name" value="Acetylglutamate kinase-like"/>
    <property type="match status" value="1"/>
</dbReference>
<dbReference type="HAMAP" id="MF_00082">
    <property type="entry name" value="ArgB"/>
    <property type="match status" value="1"/>
</dbReference>
<dbReference type="InterPro" id="IPR036393">
    <property type="entry name" value="AceGlu_kinase-like_sf"/>
</dbReference>
<dbReference type="InterPro" id="IPR004662">
    <property type="entry name" value="AcgluKinase_fam"/>
</dbReference>
<dbReference type="InterPro" id="IPR037528">
    <property type="entry name" value="ArgB"/>
</dbReference>
<dbReference type="InterPro" id="IPR001048">
    <property type="entry name" value="Asp/Glu/Uridylate_kinase"/>
</dbReference>
<dbReference type="InterPro" id="IPR041727">
    <property type="entry name" value="NAGK-C"/>
</dbReference>
<dbReference type="NCBIfam" id="TIGR00761">
    <property type="entry name" value="argB"/>
    <property type="match status" value="1"/>
</dbReference>
<dbReference type="PANTHER" id="PTHR23342">
    <property type="entry name" value="N-ACETYLGLUTAMATE SYNTHASE"/>
    <property type="match status" value="1"/>
</dbReference>
<dbReference type="PANTHER" id="PTHR23342:SF0">
    <property type="entry name" value="N-ACETYLGLUTAMATE SYNTHASE, MITOCHONDRIAL"/>
    <property type="match status" value="1"/>
</dbReference>
<dbReference type="Pfam" id="PF00696">
    <property type="entry name" value="AA_kinase"/>
    <property type="match status" value="1"/>
</dbReference>
<dbReference type="PIRSF" id="PIRSF000728">
    <property type="entry name" value="NAGK"/>
    <property type="match status" value="1"/>
</dbReference>
<dbReference type="SUPFAM" id="SSF53633">
    <property type="entry name" value="Carbamate kinase-like"/>
    <property type="match status" value="1"/>
</dbReference>
<evidence type="ECO:0000255" key="1">
    <source>
        <dbReference type="HAMAP-Rule" id="MF_00082"/>
    </source>
</evidence>
<accession>Q6NC44</accession>